<evidence type="ECO:0000255" key="1">
    <source>
        <dbReference type="HAMAP-Rule" id="MF_00314"/>
    </source>
</evidence>
<feature type="chain" id="PRO_1000048372" description="A-type ATP synthase subunit C">
    <location>
        <begin position="1"/>
        <end position="385"/>
    </location>
</feature>
<dbReference type="EMBL" id="CP000102">
    <property type="protein sequence ID" value="ABC57518.1"/>
    <property type="molecule type" value="Genomic_DNA"/>
</dbReference>
<dbReference type="RefSeq" id="WP_011406717.1">
    <property type="nucleotide sequence ID" value="NC_007681.1"/>
</dbReference>
<dbReference type="SMR" id="Q2NF85"/>
<dbReference type="STRING" id="339860.Msp_1137"/>
<dbReference type="KEGG" id="mst:Msp_1137"/>
<dbReference type="eggNOG" id="arCOG02459">
    <property type="taxonomic scope" value="Archaea"/>
</dbReference>
<dbReference type="HOGENOM" id="CLU_059311_0_0_2"/>
<dbReference type="OrthoDB" id="4272at2157"/>
<dbReference type="Proteomes" id="UP000001931">
    <property type="component" value="Chromosome"/>
</dbReference>
<dbReference type="GO" id="GO:0005886">
    <property type="term" value="C:plasma membrane"/>
    <property type="evidence" value="ECO:0007669"/>
    <property type="project" value="UniProtKB-SubCell"/>
</dbReference>
<dbReference type="GO" id="GO:0033179">
    <property type="term" value="C:proton-transporting V-type ATPase, V0 domain"/>
    <property type="evidence" value="ECO:0007669"/>
    <property type="project" value="InterPro"/>
</dbReference>
<dbReference type="GO" id="GO:0005524">
    <property type="term" value="F:ATP binding"/>
    <property type="evidence" value="ECO:0007669"/>
    <property type="project" value="UniProtKB-UniRule"/>
</dbReference>
<dbReference type="GO" id="GO:0046933">
    <property type="term" value="F:proton-transporting ATP synthase activity, rotational mechanism"/>
    <property type="evidence" value="ECO:0007669"/>
    <property type="project" value="UniProtKB-UniRule"/>
</dbReference>
<dbReference type="GO" id="GO:0046961">
    <property type="term" value="F:proton-transporting ATPase activity, rotational mechanism"/>
    <property type="evidence" value="ECO:0007669"/>
    <property type="project" value="InterPro"/>
</dbReference>
<dbReference type="GO" id="GO:0042777">
    <property type="term" value="P:proton motive force-driven plasma membrane ATP synthesis"/>
    <property type="evidence" value="ECO:0007669"/>
    <property type="project" value="UniProtKB-UniRule"/>
</dbReference>
<dbReference type="Gene3D" id="1.10.132.50">
    <property type="entry name" value="ATP synthase (C/AC39) subunit, domain 3"/>
    <property type="match status" value="1"/>
</dbReference>
<dbReference type="Gene3D" id="1.20.1690.10">
    <property type="entry name" value="V-type ATP synthase subunit C domain"/>
    <property type="match status" value="2"/>
</dbReference>
<dbReference type="HAMAP" id="MF_00314">
    <property type="entry name" value="ATP_synth_C_arch"/>
    <property type="match status" value="1"/>
</dbReference>
<dbReference type="InterPro" id="IPR036079">
    <property type="entry name" value="ATPase_csu/dsu_sf"/>
</dbReference>
<dbReference type="InterPro" id="IPR014272">
    <property type="entry name" value="ATPase_V0-cplx_csu"/>
</dbReference>
<dbReference type="InterPro" id="IPR002843">
    <property type="entry name" value="ATPase_V0-cplx_csu/dsu"/>
</dbReference>
<dbReference type="InterPro" id="IPR050873">
    <property type="entry name" value="V-ATPase_V0D/AC39_subunit"/>
</dbReference>
<dbReference type="InterPro" id="IPR035067">
    <property type="entry name" value="V-type_ATPase_csu/dsu"/>
</dbReference>
<dbReference type="InterPro" id="IPR044911">
    <property type="entry name" value="V-type_ATPase_csu/dsu_dom_3"/>
</dbReference>
<dbReference type="NCBIfam" id="TIGR02923">
    <property type="entry name" value="AhaC"/>
    <property type="match status" value="1"/>
</dbReference>
<dbReference type="NCBIfam" id="NF002267">
    <property type="entry name" value="PRK01198.1-3"/>
    <property type="match status" value="1"/>
</dbReference>
<dbReference type="PANTHER" id="PTHR38682">
    <property type="entry name" value="V-TYPE ATP SYNTHASE SUBUNIT C"/>
    <property type="match status" value="1"/>
</dbReference>
<dbReference type="PANTHER" id="PTHR38682:SF1">
    <property type="entry name" value="V-TYPE ATP SYNTHASE SUBUNIT C"/>
    <property type="match status" value="1"/>
</dbReference>
<dbReference type="Pfam" id="PF01992">
    <property type="entry name" value="vATP-synt_AC39"/>
    <property type="match status" value="1"/>
</dbReference>
<dbReference type="SUPFAM" id="SSF103486">
    <property type="entry name" value="V-type ATP synthase subunit C"/>
    <property type="match status" value="1"/>
</dbReference>
<sequence>MEESITGLITSFGFSSPEAFIALLVVVLAVIGAVIVVITFRPLMEYYPYTYPNARVRAKIGKILNEKQIAELAESESLEEVQNFLRGHKDYAKFVDKYPIEQALDANLAESYDLLARIAPGDLKPTFDLMLDQWDIKNIKSVLIAREAKLNEEETRELLVPYGELKDDQDKLIEADSVQDLIVALEGTPYAKILEEALPDYNENKTLLTLESALDNYYYERLLVKSSSQADDNTRMLHSYIGTKVDIANIKIILRAKADNLTYDQIKPYVIDNGYQLRGWKLKEFMESEDMNSLLSSIESSEYGSIVADHIPEYNSTKSITVFDEALDSYERNMAKNIFRKKPFGVGPIVGFMNKKEIEIKNLKIIARSKRGSSIPSSEIKEMLL</sequence>
<comment type="function">
    <text evidence="1">Component of the A-type ATP synthase that produces ATP from ADP in the presence of a proton gradient across the membrane.</text>
</comment>
<comment type="subunit">
    <text evidence="1">Has multiple subunits with at least A(3), B(3), C, D, E, F, H, I and proteolipid K(x).</text>
</comment>
<comment type="subcellular location">
    <subcellularLocation>
        <location evidence="1">Cell membrane</location>
        <topology evidence="1">Peripheral membrane protein</topology>
    </subcellularLocation>
</comment>
<comment type="similarity">
    <text evidence="1">Belongs to the V-ATPase V0D/AC39 subunit family.</text>
</comment>
<organism>
    <name type="scientific">Methanosphaera stadtmanae (strain ATCC 43021 / DSM 3091 / JCM 11832 / MCB-3)</name>
    <dbReference type="NCBI Taxonomy" id="339860"/>
    <lineage>
        <taxon>Archaea</taxon>
        <taxon>Methanobacteriati</taxon>
        <taxon>Methanobacteriota</taxon>
        <taxon>Methanomada group</taxon>
        <taxon>Methanobacteria</taxon>
        <taxon>Methanobacteriales</taxon>
        <taxon>Methanobacteriaceae</taxon>
        <taxon>Methanosphaera</taxon>
    </lineage>
</organism>
<protein>
    <recommendedName>
        <fullName evidence="1">A-type ATP synthase subunit C</fullName>
    </recommendedName>
</protein>
<accession>Q2NF85</accession>
<proteinExistence type="inferred from homology"/>
<gene>
    <name evidence="1" type="primary">atpC</name>
    <name type="ordered locus">Msp_1137</name>
</gene>
<keyword id="KW-0066">ATP synthesis</keyword>
<keyword id="KW-1003">Cell membrane</keyword>
<keyword id="KW-0375">Hydrogen ion transport</keyword>
<keyword id="KW-0406">Ion transport</keyword>
<keyword id="KW-0472">Membrane</keyword>
<keyword id="KW-1185">Reference proteome</keyword>
<keyword id="KW-0813">Transport</keyword>
<reference key="1">
    <citation type="journal article" date="2006" name="J. Bacteriol.">
        <title>The genome sequence of Methanosphaera stadtmanae reveals why this human intestinal archaeon is restricted to methanol and H2 for methane formation and ATP synthesis.</title>
        <authorList>
            <person name="Fricke W.F."/>
            <person name="Seedorf H."/>
            <person name="Henne A."/>
            <person name="Kruer M."/>
            <person name="Liesegang H."/>
            <person name="Hedderich R."/>
            <person name="Gottschalk G."/>
            <person name="Thauer R.K."/>
        </authorList>
    </citation>
    <scope>NUCLEOTIDE SEQUENCE [LARGE SCALE GENOMIC DNA]</scope>
    <source>
        <strain>ATCC 43021 / DSM 3091 / JCM 11832 / MCB-3</strain>
    </source>
</reference>
<name>AATC_METST</name>